<organism>
    <name type="scientific">Staphylococcus aureus</name>
    <dbReference type="NCBI Taxonomy" id="1280"/>
    <lineage>
        <taxon>Bacteria</taxon>
        <taxon>Bacillati</taxon>
        <taxon>Bacillota</taxon>
        <taxon>Bacilli</taxon>
        <taxon>Bacillales</taxon>
        <taxon>Staphylococcaceae</taxon>
        <taxon>Staphylococcus</taxon>
    </lineage>
</organism>
<keyword id="KW-0046">Antibiotic resistance</keyword>
<keyword id="KW-0489">Methyltransferase</keyword>
<keyword id="KW-0694">RNA-binding</keyword>
<keyword id="KW-0949">S-adenosyl-L-methionine</keyword>
<keyword id="KW-0808">Transferase</keyword>
<keyword id="KW-0814">Transposable element</keyword>
<sequence length="243" mass="28408">MNQKNPKDTQNFITSKKHVKEILNHTNISKQDNVIEIGSGKGHFTKELVKMSRSVTAIEIDGGLCQVTKEAVNPSENIKVIQTDILKFSFPKHINYKIYGNIPYNISTDIVKRITFESQAKYSYLIVEKGFAKRLQNLQRALGLLLMVEMDIKMLKKVPPLYFHPKPSVDSVLIVLERHQPLISKKDYKKYRSFVYKWVNREYRVLFTKNQFRQALKHANVTNINKLSKEQFLSIFNSYKLFH</sequence>
<protein>
    <recommendedName>
        <fullName>rRNA adenine N-6-methyltransferase</fullName>
        <ecNumber>2.1.1.184</ecNumber>
    </recommendedName>
    <alternativeName>
        <fullName>Erythromycin resistance protein</fullName>
    </alternativeName>
    <alternativeName>
        <fullName>Macrolide-lincosamide-streptogramin B resistance protein</fullName>
    </alternativeName>
</protein>
<accession>P0A0H3</accession>
<accession>P06699</accession>
<comment type="function">
    <text>This protein produces a dimethylation of the adenine residue at position 2085 in 23S rRNA, resulting in reduced affinity between ribosomes and macrolide-lincosamide-streptogramin B antibiotics.</text>
</comment>
<comment type="catalytic activity">
    <reaction>
        <text>adenosine(2085) in 23S rRNA + 2 S-adenosyl-L-methionine = N(6)-dimethyladenosine(2085) in 23S rRNA + 2 S-adenosyl-L-homocysteine + 2 H(+)</text>
        <dbReference type="Rhea" id="RHEA:42784"/>
        <dbReference type="Rhea" id="RHEA-COMP:10237"/>
        <dbReference type="Rhea" id="RHEA-COMP:10238"/>
        <dbReference type="ChEBI" id="CHEBI:15378"/>
        <dbReference type="ChEBI" id="CHEBI:57856"/>
        <dbReference type="ChEBI" id="CHEBI:59789"/>
        <dbReference type="ChEBI" id="CHEBI:74411"/>
        <dbReference type="ChEBI" id="CHEBI:74493"/>
        <dbReference type="EC" id="2.1.1.184"/>
    </reaction>
</comment>
<comment type="similarity">
    <text evidence="1">Belongs to the class I-like SAM-binding methyltransferase superfamily. rRNA adenine N(6)-methyltransferase family.</text>
</comment>
<name>ERMA_STAAU</name>
<evidence type="ECO:0000255" key="1">
    <source>
        <dbReference type="PROSITE-ProRule" id="PRU01026"/>
    </source>
</evidence>
<gene>
    <name type="primary">ermA</name>
</gene>
<feature type="chain" id="PRO_0000101681" description="rRNA adenine N-6-methyltransferase">
    <location>
        <begin position="1"/>
        <end position="243"/>
    </location>
</feature>
<feature type="binding site" evidence="1">
    <location>
        <position position="11"/>
    </location>
    <ligand>
        <name>S-adenosyl-L-methionine</name>
        <dbReference type="ChEBI" id="CHEBI:59789"/>
    </ligand>
</feature>
<feature type="binding site" evidence="1">
    <location>
        <position position="13"/>
    </location>
    <ligand>
        <name>S-adenosyl-L-methionine</name>
        <dbReference type="ChEBI" id="CHEBI:59789"/>
    </ligand>
</feature>
<feature type="binding site" evidence="1">
    <location>
        <position position="38"/>
    </location>
    <ligand>
        <name>S-adenosyl-L-methionine</name>
        <dbReference type="ChEBI" id="CHEBI:59789"/>
    </ligand>
</feature>
<feature type="binding site" evidence="1">
    <location>
        <position position="59"/>
    </location>
    <ligand>
        <name>S-adenosyl-L-methionine</name>
        <dbReference type="ChEBI" id="CHEBI:59789"/>
    </ligand>
</feature>
<feature type="binding site" evidence="1">
    <location>
        <position position="84"/>
    </location>
    <ligand>
        <name>S-adenosyl-L-methionine</name>
        <dbReference type="ChEBI" id="CHEBI:59789"/>
    </ligand>
</feature>
<feature type="binding site" evidence="1">
    <location>
        <position position="101"/>
    </location>
    <ligand>
        <name>S-adenosyl-L-methionine</name>
        <dbReference type="ChEBI" id="CHEBI:59789"/>
    </ligand>
</feature>
<dbReference type="EC" id="2.1.1.184"/>
<dbReference type="EMBL" id="X03216">
    <property type="protein sequence ID" value="CAA26964.1"/>
    <property type="molecule type" value="Genomic_DNA"/>
</dbReference>
<dbReference type="PIR" id="E24584">
    <property type="entry name" value="A25101"/>
</dbReference>
<dbReference type="RefSeq" id="YP_006958113.1">
    <property type="nucleotide sequence ID" value="NC_019144.1"/>
</dbReference>
<dbReference type="SMR" id="P0A0H3"/>
<dbReference type="CARD" id="ARO:3000347">
    <property type="molecule name" value="ErmA"/>
    <property type="mechanism identifier" value="ARO:0001001"/>
    <property type="mechanism name" value="antibiotic target alteration"/>
</dbReference>
<dbReference type="KEGG" id="ag:CAA26964"/>
<dbReference type="OMA" id="AWLTMEK"/>
<dbReference type="GO" id="GO:0005829">
    <property type="term" value="C:cytosol"/>
    <property type="evidence" value="ECO:0007669"/>
    <property type="project" value="TreeGrafter"/>
</dbReference>
<dbReference type="GO" id="GO:0052910">
    <property type="term" value="F:23S rRNA (adenine(2085)-N(6))-dimethyltransferase activity"/>
    <property type="evidence" value="ECO:0007669"/>
    <property type="project" value="UniProtKB-EC"/>
</dbReference>
<dbReference type="GO" id="GO:0003723">
    <property type="term" value="F:RNA binding"/>
    <property type="evidence" value="ECO:0007669"/>
    <property type="project" value="UniProtKB-KW"/>
</dbReference>
<dbReference type="GO" id="GO:0000179">
    <property type="term" value="F:rRNA (adenine-N6,N6-)-dimethyltransferase activity"/>
    <property type="evidence" value="ECO:0007669"/>
    <property type="project" value="InterPro"/>
</dbReference>
<dbReference type="GO" id="GO:0046677">
    <property type="term" value="P:response to antibiotic"/>
    <property type="evidence" value="ECO:0007669"/>
    <property type="project" value="UniProtKB-KW"/>
</dbReference>
<dbReference type="CDD" id="cd02440">
    <property type="entry name" value="AdoMet_MTases"/>
    <property type="match status" value="1"/>
</dbReference>
<dbReference type="Gene3D" id="1.10.8.100">
    <property type="entry name" value="Ribosomal RNA adenine dimethylase-like, domain 2"/>
    <property type="match status" value="1"/>
</dbReference>
<dbReference type="Gene3D" id="3.40.50.150">
    <property type="entry name" value="Vaccinia Virus protein VP39"/>
    <property type="match status" value="1"/>
</dbReference>
<dbReference type="InterPro" id="IPR001737">
    <property type="entry name" value="KsgA/Erm"/>
</dbReference>
<dbReference type="InterPro" id="IPR023165">
    <property type="entry name" value="rRNA_Ade_diMease-like_C"/>
</dbReference>
<dbReference type="InterPro" id="IPR020596">
    <property type="entry name" value="rRNA_Ade_Mease_Trfase_CS"/>
</dbReference>
<dbReference type="InterPro" id="IPR020598">
    <property type="entry name" value="rRNA_Ade_methylase_Trfase_N"/>
</dbReference>
<dbReference type="InterPro" id="IPR029063">
    <property type="entry name" value="SAM-dependent_MTases_sf"/>
</dbReference>
<dbReference type="NCBIfam" id="NF000499">
    <property type="entry name" value="Erm23S_rRNA_broad"/>
    <property type="match status" value="1"/>
</dbReference>
<dbReference type="NCBIfam" id="NF012222">
    <property type="entry name" value="erm_A_23S_MT"/>
    <property type="match status" value="1"/>
</dbReference>
<dbReference type="PANTHER" id="PTHR11727">
    <property type="entry name" value="DIMETHYLADENOSINE TRANSFERASE"/>
    <property type="match status" value="1"/>
</dbReference>
<dbReference type="PANTHER" id="PTHR11727:SF7">
    <property type="entry name" value="DIMETHYLADENOSINE TRANSFERASE-RELATED"/>
    <property type="match status" value="1"/>
</dbReference>
<dbReference type="Pfam" id="PF00398">
    <property type="entry name" value="RrnaAD"/>
    <property type="match status" value="1"/>
</dbReference>
<dbReference type="SMART" id="SM00650">
    <property type="entry name" value="rADc"/>
    <property type="match status" value="1"/>
</dbReference>
<dbReference type="SUPFAM" id="SSF53335">
    <property type="entry name" value="S-adenosyl-L-methionine-dependent methyltransferases"/>
    <property type="match status" value="1"/>
</dbReference>
<dbReference type="PROSITE" id="PS01131">
    <property type="entry name" value="RRNA_A_DIMETH"/>
    <property type="match status" value="1"/>
</dbReference>
<dbReference type="PROSITE" id="PS51689">
    <property type="entry name" value="SAM_RNA_A_N6_MT"/>
    <property type="match status" value="1"/>
</dbReference>
<reference key="1">
    <citation type="journal article" date="1985" name="EMBO J.">
        <title>Transposon Tn554: complete nucleotide sequence and isolation of transposition-defective and antibiotic-sensitive mutants.</title>
        <authorList>
            <person name="Murphy E."/>
            <person name="Huwyler L."/>
            <person name="Do Carno de Freire Bastos M."/>
        </authorList>
    </citation>
    <scope>NUCLEOTIDE SEQUENCE [GENOMIC DNA]</scope>
    <source>
        <transposon>Tn554</transposon>
    </source>
</reference>
<reference key="2">
    <citation type="journal article" date="1985" name="J. Bacteriol.">
        <title>Nucleotide sequence of ermA, a macrolide-lincosamide-streptogramin B determinant in Staphylococcus aureus.</title>
        <authorList>
            <person name="Murphy E."/>
        </authorList>
    </citation>
    <scope>NUCLEOTIDE SEQUENCE [GENOMIC DNA]</scope>
</reference>
<proteinExistence type="inferred from homology"/>